<gene>
    <name evidence="1" type="primary">lgt</name>
    <name type="ordered locus">TM_0158</name>
</gene>
<proteinExistence type="inferred from homology"/>
<sequence>MKKILAFLLIAAGSTLFFVFLFIFLSKVFSGEILLSRYIFRIGGFELRWYSTLILMGFLISYFVARKRAKNEGINLEEFDELIFYGVIAGIVGARLYYVLFNLKYYRSLWDALKIWEGGLAIHGAVIGALLTGFLYVRLKKPSFTFLQATDLFTSVLPLGQAIGRWGNFFNYEAFGVPTNLPWKMFVPEPYRPVVYKDYSFFHPTFLYESIWDLLVFFMLSVYFKRYRKRHGEVTCLYFVLYSLGRIVIERLRVDSLMIGNIKAAQLLSAVLILLGFTGFLILRSSQEPKRAF</sequence>
<protein>
    <recommendedName>
        <fullName evidence="1">Phosphatidylglycerol--prolipoprotein diacylglyceryl transferase</fullName>
        <ecNumber evidence="1">2.5.1.145</ecNumber>
    </recommendedName>
</protein>
<feature type="chain" id="PRO_0000172701" description="Phosphatidylglycerol--prolipoprotein diacylglyceryl transferase">
    <location>
        <begin position="1"/>
        <end position="293"/>
    </location>
</feature>
<feature type="transmembrane region" description="Helical" evidence="1">
    <location>
        <begin position="45"/>
        <end position="65"/>
    </location>
</feature>
<feature type="transmembrane region" description="Helical" evidence="1">
    <location>
        <begin position="81"/>
        <end position="101"/>
    </location>
</feature>
<feature type="transmembrane region" description="Helical" evidence="1">
    <location>
        <begin position="115"/>
        <end position="135"/>
    </location>
</feature>
<feature type="transmembrane region" description="Helical" evidence="1">
    <location>
        <begin position="144"/>
        <end position="164"/>
    </location>
</feature>
<feature type="transmembrane region" description="Helical" evidence="1">
    <location>
        <begin position="204"/>
        <end position="224"/>
    </location>
</feature>
<feature type="transmembrane region" description="Helical" evidence="1">
    <location>
        <begin position="231"/>
        <end position="249"/>
    </location>
</feature>
<feature type="transmembrane region" description="Helical" evidence="1">
    <location>
        <begin position="262"/>
        <end position="282"/>
    </location>
</feature>
<feature type="binding site" evidence="1">
    <location>
        <position position="165"/>
    </location>
    <ligand>
        <name>a 1,2-diacyl-sn-glycero-3-phospho-(1'-sn-glycerol)</name>
        <dbReference type="ChEBI" id="CHEBI:64716"/>
    </ligand>
</feature>
<accession>Q9WY05</accession>
<name>LGT_THEMA</name>
<reference key="1">
    <citation type="journal article" date="1999" name="Nature">
        <title>Evidence for lateral gene transfer between Archaea and Bacteria from genome sequence of Thermotoga maritima.</title>
        <authorList>
            <person name="Nelson K.E."/>
            <person name="Clayton R.A."/>
            <person name="Gill S.R."/>
            <person name="Gwinn M.L."/>
            <person name="Dodson R.J."/>
            <person name="Haft D.H."/>
            <person name="Hickey E.K."/>
            <person name="Peterson J.D."/>
            <person name="Nelson W.C."/>
            <person name="Ketchum K.A."/>
            <person name="McDonald L.A."/>
            <person name="Utterback T.R."/>
            <person name="Malek J.A."/>
            <person name="Linher K.D."/>
            <person name="Garrett M.M."/>
            <person name="Stewart A.M."/>
            <person name="Cotton M.D."/>
            <person name="Pratt M.S."/>
            <person name="Phillips C.A."/>
            <person name="Richardson D.L."/>
            <person name="Heidelberg J.F."/>
            <person name="Sutton G.G."/>
            <person name="Fleischmann R.D."/>
            <person name="Eisen J.A."/>
            <person name="White O."/>
            <person name="Salzberg S.L."/>
            <person name="Smith H.O."/>
            <person name="Venter J.C."/>
            <person name="Fraser C.M."/>
        </authorList>
    </citation>
    <scope>NUCLEOTIDE SEQUENCE [LARGE SCALE GENOMIC DNA]</scope>
    <source>
        <strain>ATCC 43589 / DSM 3109 / JCM 10099 / NBRC 100826 / MSB8</strain>
    </source>
</reference>
<dbReference type="EC" id="2.5.1.145" evidence="1"/>
<dbReference type="EMBL" id="AE000512">
    <property type="protein sequence ID" value="AAD35251.1"/>
    <property type="molecule type" value="Genomic_DNA"/>
</dbReference>
<dbReference type="PIR" id="D72410">
    <property type="entry name" value="D72410"/>
</dbReference>
<dbReference type="RefSeq" id="NP_227973.1">
    <property type="nucleotide sequence ID" value="NC_000853.1"/>
</dbReference>
<dbReference type="RefSeq" id="WP_004082778.1">
    <property type="nucleotide sequence ID" value="NZ_CP011107.1"/>
</dbReference>
<dbReference type="SMR" id="Q9WY05"/>
<dbReference type="FunCoup" id="Q9WY05">
    <property type="interactions" value="247"/>
</dbReference>
<dbReference type="STRING" id="243274.TM_0158"/>
<dbReference type="PaxDb" id="243274-THEMA_04010"/>
<dbReference type="EnsemblBacteria" id="AAD35251">
    <property type="protein sequence ID" value="AAD35251"/>
    <property type="gene ID" value="TM_0158"/>
</dbReference>
<dbReference type="KEGG" id="tma:TM0158"/>
<dbReference type="KEGG" id="tmm:Tmari_0156"/>
<dbReference type="KEGG" id="tmw:THMA_0154"/>
<dbReference type="eggNOG" id="COG0682">
    <property type="taxonomic scope" value="Bacteria"/>
</dbReference>
<dbReference type="InParanoid" id="Q9WY05"/>
<dbReference type="OrthoDB" id="871140at2"/>
<dbReference type="UniPathway" id="UPA00664"/>
<dbReference type="Proteomes" id="UP000008183">
    <property type="component" value="Chromosome"/>
</dbReference>
<dbReference type="GO" id="GO:0005886">
    <property type="term" value="C:plasma membrane"/>
    <property type="evidence" value="ECO:0000318"/>
    <property type="project" value="GO_Central"/>
</dbReference>
<dbReference type="GO" id="GO:0008961">
    <property type="term" value="F:phosphatidylglycerol-prolipoprotein diacylglyceryl transferase activity"/>
    <property type="evidence" value="ECO:0000318"/>
    <property type="project" value="GO_Central"/>
</dbReference>
<dbReference type="GO" id="GO:0042158">
    <property type="term" value="P:lipoprotein biosynthetic process"/>
    <property type="evidence" value="ECO:0000318"/>
    <property type="project" value="GO_Central"/>
</dbReference>
<dbReference type="HAMAP" id="MF_01147">
    <property type="entry name" value="Lgt"/>
    <property type="match status" value="1"/>
</dbReference>
<dbReference type="InterPro" id="IPR001640">
    <property type="entry name" value="Lgt"/>
</dbReference>
<dbReference type="NCBIfam" id="TIGR00544">
    <property type="entry name" value="lgt"/>
    <property type="match status" value="1"/>
</dbReference>
<dbReference type="PANTHER" id="PTHR30589:SF0">
    <property type="entry name" value="PHOSPHATIDYLGLYCEROL--PROLIPOPROTEIN DIACYLGLYCERYL TRANSFERASE"/>
    <property type="match status" value="1"/>
</dbReference>
<dbReference type="PANTHER" id="PTHR30589">
    <property type="entry name" value="PROLIPOPROTEIN DIACYLGLYCERYL TRANSFERASE"/>
    <property type="match status" value="1"/>
</dbReference>
<dbReference type="Pfam" id="PF01790">
    <property type="entry name" value="LGT"/>
    <property type="match status" value="1"/>
</dbReference>
<dbReference type="PROSITE" id="PS01311">
    <property type="entry name" value="LGT"/>
    <property type="match status" value="1"/>
</dbReference>
<evidence type="ECO:0000255" key="1">
    <source>
        <dbReference type="HAMAP-Rule" id="MF_01147"/>
    </source>
</evidence>
<comment type="function">
    <text evidence="1">Catalyzes the transfer of the diacylglyceryl group from phosphatidylglycerol to the sulfhydryl group of the N-terminal cysteine of a prolipoprotein, the first step in the formation of mature lipoproteins.</text>
</comment>
<comment type="catalytic activity">
    <reaction evidence="1">
        <text>L-cysteinyl-[prolipoprotein] + a 1,2-diacyl-sn-glycero-3-phospho-(1'-sn-glycerol) = an S-1,2-diacyl-sn-glyceryl-L-cysteinyl-[prolipoprotein] + sn-glycerol 1-phosphate + H(+)</text>
        <dbReference type="Rhea" id="RHEA:56712"/>
        <dbReference type="Rhea" id="RHEA-COMP:14679"/>
        <dbReference type="Rhea" id="RHEA-COMP:14680"/>
        <dbReference type="ChEBI" id="CHEBI:15378"/>
        <dbReference type="ChEBI" id="CHEBI:29950"/>
        <dbReference type="ChEBI" id="CHEBI:57685"/>
        <dbReference type="ChEBI" id="CHEBI:64716"/>
        <dbReference type="ChEBI" id="CHEBI:140658"/>
        <dbReference type="EC" id="2.5.1.145"/>
    </reaction>
</comment>
<comment type="pathway">
    <text evidence="1">Protein modification; lipoprotein biosynthesis (diacylglyceryl transfer).</text>
</comment>
<comment type="subcellular location">
    <subcellularLocation>
        <location evidence="1">Cell inner membrane</location>
        <topology evidence="1">Multi-pass membrane protein</topology>
    </subcellularLocation>
</comment>
<comment type="similarity">
    <text evidence="1">Belongs to the Lgt family.</text>
</comment>
<organism>
    <name type="scientific">Thermotoga maritima (strain ATCC 43589 / DSM 3109 / JCM 10099 / NBRC 100826 / MSB8)</name>
    <dbReference type="NCBI Taxonomy" id="243274"/>
    <lineage>
        <taxon>Bacteria</taxon>
        <taxon>Thermotogati</taxon>
        <taxon>Thermotogota</taxon>
        <taxon>Thermotogae</taxon>
        <taxon>Thermotogales</taxon>
        <taxon>Thermotogaceae</taxon>
        <taxon>Thermotoga</taxon>
    </lineage>
</organism>
<keyword id="KW-0997">Cell inner membrane</keyword>
<keyword id="KW-1003">Cell membrane</keyword>
<keyword id="KW-0472">Membrane</keyword>
<keyword id="KW-1185">Reference proteome</keyword>
<keyword id="KW-0808">Transferase</keyword>
<keyword id="KW-0812">Transmembrane</keyword>
<keyword id="KW-1133">Transmembrane helix</keyword>